<dbReference type="EMBL" id="AP006878">
    <property type="protein sequence ID" value="BAD85267.1"/>
    <property type="molecule type" value="Genomic_DNA"/>
</dbReference>
<dbReference type="RefSeq" id="WP_011250029.1">
    <property type="nucleotide sequence ID" value="NC_006624.1"/>
</dbReference>
<dbReference type="PDB" id="6SKF">
    <property type="method" value="EM"/>
    <property type="resolution" value="2.95 A"/>
    <property type="chains" value="Ao=1-147"/>
</dbReference>
<dbReference type="PDB" id="6SKG">
    <property type="method" value="EM"/>
    <property type="resolution" value="2.65 A"/>
    <property type="chains" value="Ao=1-147"/>
</dbReference>
<dbReference type="PDB" id="6TH6">
    <property type="method" value="EM"/>
    <property type="resolution" value="2.55 A"/>
    <property type="chains" value="Ao=1-147"/>
</dbReference>
<dbReference type="PDBsum" id="6SKF"/>
<dbReference type="PDBsum" id="6SKG"/>
<dbReference type="PDBsum" id="6TH6"/>
<dbReference type="EMDB" id="EMD-10223"/>
<dbReference type="EMDB" id="EMD-10224"/>
<dbReference type="EMDB" id="EMD-10503"/>
<dbReference type="SMR" id="Q5JE20"/>
<dbReference type="FunCoup" id="Q5JE20">
    <property type="interactions" value="157"/>
</dbReference>
<dbReference type="IntAct" id="Q5JE20">
    <property type="interactions" value="1"/>
</dbReference>
<dbReference type="MINT" id="Q5JE20"/>
<dbReference type="STRING" id="69014.TK1078"/>
<dbReference type="EnsemblBacteria" id="BAD85267">
    <property type="protein sequence ID" value="BAD85267"/>
    <property type="gene ID" value="TK1078"/>
</dbReference>
<dbReference type="GeneID" id="25153102"/>
<dbReference type="KEGG" id="tko:TK1078"/>
<dbReference type="PATRIC" id="fig|69014.16.peg.1054"/>
<dbReference type="eggNOG" id="arCOG04255">
    <property type="taxonomic scope" value="Archaea"/>
</dbReference>
<dbReference type="HOGENOM" id="CLU_115574_0_1_2"/>
<dbReference type="InParanoid" id="Q5JE20"/>
<dbReference type="OrthoDB" id="45154at2157"/>
<dbReference type="PhylomeDB" id="Q5JE20"/>
<dbReference type="Proteomes" id="UP000000536">
    <property type="component" value="Chromosome"/>
</dbReference>
<dbReference type="GO" id="GO:0022627">
    <property type="term" value="C:cytosolic small ribosomal subunit"/>
    <property type="evidence" value="ECO:0000318"/>
    <property type="project" value="GO_Central"/>
</dbReference>
<dbReference type="GO" id="GO:0005840">
    <property type="term" value="C:ribosome"/>
    <property type="evidence" value="ECO:0000318"/>
    <property type="project" value="GO_Central"/>
</dbReference>
<dbReference type="GO" id="GO:0019843">
    <property type="term" value="F:rRNA binding"/>
    <property type="evidence" value="ECO:0007669"/>
    <property type="project" value="UniProtKB-UniRule"/>
</dbReference>
<dbReference type="GO" id="GO:0003735">
    <property type="term" value="F:structural constituent of ribosome"/>
    <property type="evidence" value="ECO:0000318"/>
    <property type="project" value="GO_Central"/>
</dbReference>
<dbReference type="GO" id="GO:0006412">
    <property type="term" value="P:translation"/>
    <property type="evidence" value="ECO:0000318"/>
    <property type="project" value="GO_Central"/>
</dbReference>
<dbReference type="CDD" id="cd03367">
    <property type="entry name" value="Ribosomal_S23"/>
    <property type="match status" value="1"/>
</dbReference>
<dbReference type="FunFam" id="2.40.50.140:FF:000007">
    <property type="entry name" value="40S ribosomal protein S23"/>
    <property type="match status" value="1"/>
</dbReference>
<dbReference type="Gene3D" id="2.40.50.140">
    <property type="entry name" value="Nucleic acid-binding proteins"/>
    <property type="match status" value="1"/>
</dbReference>
<dbReference type="HAMAP" id="MF_00403_A">
    <property type="entry name" value="Ribosomal_uS12_A"/>
    <property type="match status" value="1"/>
</dbReference>
<dbReference type="InterPro" id="IPR012340">
    <property type="entry name" value="NA-bd_OB-fold"/>
</dbReference>
<dbReference type="InterPro" id="IPR006032">
    <property type="entry name" value="Ribosomal_uS12"/>
</dbReference>
<dbReference type="InterPro" id="IPR022863">
    <property type="entry name" value="Ribosomal_uS12_arc"/>
</dbReference>
<dbReference type="InterPro" id="IPR005679">
    <property type="entry name" value="Ribosomal_uS12_bac"/>
</dbReference>
<dbReference type="InterPro" id="IPR005680">
    <property type="entry name" value="Ribosomal_uS12_euk/arc"/>
</dbReference>
<dbReference type="NCBIfam" id="NF003254">
    <property type="entry name" value="PRK04211.1"/>
    <property type="match status" value="1"/>
</dbReference>
<dbReference type="NCBIfam" id="TIGR00982">
    <property type="entry name" value="uS12_E_A"/>
    <property type="match status" value="1"/>
</dbReference>
<dbReference type="PANTHER" id="PTHR11652">
    <property type="entry name" value="30S RIBOSOMAL PROTEIN S12 FAMILY MEMBER"/>
    <property type="match status" value="1"/>
</dbReference>
<dbReference type="Pfam" id="PF00164">
    <property type="entry name" value="Ribosom_S12_S23"/>
    <property type="match status" value="1"/>
</dbReference>
<dbReference type="PIRSF" id="PIRSF002133">
    <property type="entry name" value="Ribosomal_S12/S23"/>
    <property type="match status" value="1"/>
</dbReference>
<dbReference type="PRINTS" id="PR01034">
    <property type="entry name" value="RIBOSOMALS12"/>
</dbReference>
<dbReference type="SUPFAM" id="SSF50249">
    <property type="entry name" value="Nucleic acid-binding proteins"/>
    <property type="match status" value="1"/>
</dbReference>
<dbReference type="PROSITE" id="PS00055">
    <property type="entry name" value="RIBOSOMAL_S12"/>
    <property type="match status" value="1"/>
</dbReference>
<organism>
    <name type="scientific">Thermococcus kodakarensis (strain ATCC BAA-918 / JCM 12380 / KOD1)</name>
    <name type="common">Pyrococcus kodakaraensis (strain KOD1)</name>
    <dbReference type="NCBI Taxonomy" id="69014"/>
    <lineage>
        <taxon>Archaea</taxon>
        <taxon>Methanobacteriati</taxon>
        <taxon>Methanobacteriota</taxon>
        <taxon>Thermococci</taxon>
        <taxon>Thermococcales</taxon>
        <taxon>Thermococcaceae</taxon>
        <taxon>Thermococcus</taxon>
    </lineage>
</organism>
<keyword id="KW-0002">3D-structure</keyword>
<keyword id="KW-1185">Reference proteome</keyword>
<keyword id="KW-0687">Ribonucleoprotein</keyword>
<keyword id="KW-0689">Ribosomal protein</keyword>
<keyword id="KW-0694">RNA-binding</keyword>
<keyword id="KW-0699">rRNA-binding</keyword>
<sequence>MAGKKAPYGEFAGRKLKLKRKKFRWSDIRYKRRVLRLKEKSDPLEGAPQARGIVLEKIAVEAKQPNSAMRKAVRVQLIKNGKVVTAFTPGDGAINHIDEHDEVIIEGIGGPKGGSMGDIPGIRYKVVKVNRVSLKELVKGRKEKPRR</sequence>
<protein>
    <recommendedName>
        <fullName evidence="1">Small ribosomal subunit protein uS12</fullName>
    </recommendedName>
    <alternativeName>
        <fullName evidence="3">30S ribosomal protein S12</fullName>
    </alternativeName>
</protein>
<reference key="1">
    <citation type="journal article" date="2005" name="Genome Res.">
        <title>Complete genome sequence of the hyperthermophilic archaeon Thermococcus kodakaraensis KOD1 and comparison with Pyrococcus genomes.</title>
        <authorList>
            <person name="Fukui T."/>
            <person name="Atomi H."/>
            <person name="Kanai T."/>
            <person name="Matsumi R."/>
            <person name="Fujiwara S."/>
            <person name="Imanaka T."/>
        </authorList>
    </citation>
    <scope>NUCLEOTIDE SEQUENCE [LARGE SCALE GENOMIC DNA]</scope>
    <source>
        <strain>ATCC BAA-918 / JCM 12380 / KOD1</strain>
    </source>
</reference>
<reference evidence="4 5 6" key="2">
    <citation type="journal article" date="2020" name="Nature">
        <title>Dynamic RNA acetylation revealed by quantitative cross-evolutionary mapping.</title>
        <authorList>
            <person name="Sas-Chen A."/>
            <person name="Thomas J.M."/>
            <person name="Matzov D."/>
            <person name="Taoka M."/>
            <person name="Nance K.D."/>
            <person name="Nir R."/>
            <person name="Bryson K.M."/>
            <person name="Shachar R."/>
            <person name="Liman G.L.S."/>
            <person name="Burkhart B.W."/>
            <person name="Gamage S.T."/>
            <person name="Nobe Y."/>
            <person name="Briney C.A."/>
            <person name="Levy M.J."/>
            <person name="Fuchs R.T."/>
            <person name="Robb G.B."/>
            <person name="Hartmann J."/>
            <person name="Sharma S."/>
            <person name="Lin Q."/>
            <person name="Florens L."/>
            <person name="Washburn M.P."/>
            <person name="Isobe T."/>
            <person name="Santangelo T.J."/>
            <person name="Shalev-Benami M."/>
            <person name="Meier J.L."/>
            <person name="Schwartz S."/>
        </authorList>
    </citation>
    <scope>STRUCTURE BY ELECTRON MICROSCOPY (2.55 ANGSTROMS) IN 70S RIBOSOME</scope>
    <scope>SUBUNIT</scope>
    <source>
        <strain>ATCC BAA-918 / TS559</strain>
    </source>
</reference>
<evidence type="ECO:0000255" key="1">
    <source>
        <dbReference type="HAMAP-Rule" id="MF_00403"/>
    </source>
</evidence>
<evidence type="ECO:0000269" key="2">
    <source>
    </source>
</evidence>
<evidence type="ECO:0000305" key="3"/>
<evidence type="ECO:0007744" key="4">
    <source>
        <dbReference type="PDB" id="6SKF"/>
    </source>
</evidence>
<evidence type="ECO:0007744" key="5">
    <source>
        <dbReference type="PDB" id="6SKG"/>
    </source>
</evidence>
<evidence type="ECO:0007744" key="6">
    <source>
        <dbReference type="PDB" id="6TH6"/>
    </source>
</evidence>
<gene>
    <name evidence="1" type="primary">rps12</name>
    <name type="ordered locus">TK1078</name>
</gene>
<name>RS12_THEKO</name>
<comment type="function">
    <text evidence="1">With S4 and S5 plays an important role in translational accuracy. Located at the interface of the 30S and 50S subunits.</text>
</comment>
<comment type="subunit">
    <text evidence="1 2">Part of the 30S ribosomal subunit.</text>
</comment>
<comment type="similarity">
    <text evidence="1">Belongs to the universal ribosomal protein uS12 family.</text>
</comment>
<feature type="chain" id="PRO_0000146380" description="Small ribosomal subunit protein uS12">
    <location>
        <begin position="1"/>
        <end position="147"/>
    </location>
</feature>
<proteinExistence type="evidence at protein level"/>
<accession>Q5JE20</accession>